<gene>
    <name evidence="1" type="primary">atpD</name>
    <name type="ordered locus">HPP12_1098</name>
</gene>
<sequence length="469" mass="51464">MKAMEGKIIQVLGPVVDVEFESYLPAIFEALDINFEVNGVQKSLVLEVAAHLGGNRVRAIAMDMTEGLVRNQVVKARGKMIEVPVGEEVLGRIFNVVGESIDNLEPLKPSLTWPIHRKAPSFEQQSTKTEMFETGIKVIDLLAPYSKGGKVGLFGGAGVGKTVIIMELIHNVAYKHNGYSVFAGVGERTREGNDLYFEMKEGGVLDKVALCYGQMNEPPGARNRIAFTGLTMAEYFRDEKGLDVLMFIDNIFRYAQSGAEMSALLGRIPSAVGYQPTLAGEMGKLQERIASTKNGSITSVQAVYVPADDLTDPAPASVFAHLDATTVLNRKIAEKGIYPAVDPLDSTSRILSPQMIGEKHYEVATGIQQVLQKYKDLQDIIAILGLDELSEEDKKTVERARKIEKFLSQPFFVAEVFTGSPGKYVTLQETLEGFGGILEGKYDHIPENAFYMVGSIQEVLEKAKNMKNS</sequence>
<accession>B6JMX2</accession>
<feature type="chain" id="PRO_1000143514" description="ATP synthase subunit beta">
    <location>
        <begin position="1"/>
        <end position="469"/>
    </location>
</feature>
<feature type="binding site" evidence="1">
    <location>
        <begin position="155"/>
        <end position="162"/>
    </location>
    <ligand>
        <name>ATP</name>
        <dbReference type="ChEBI" id="CHEBI:30616"/>
    </ligand>
</feature>
<dbReference type="EC" id="7.1.2.2" evidence="1"/>
<dbReference type="EMBL" id="CP001217">
    <property type="protein sequence ID" value="ACJ08250.1"/>
    <property type="molecule type" value="Genomic_DNA"/>
</dbReference>
<dbReference type="SMR" id="B6JMX2"/>
<dbReference type="KEGG" id="hpp:HPP12_1098"/>
<dbReference type="HOGENOM" id="CLU_022398_0_2_7"/>
<dbReference type="Proteomes" id="UP000008198">
    <property type="component" value="Chromosome"/>
</dbReference>
<dbReference type="GO" id="GO:0005886">
    <property type="term" value="C:plasma membrane"/>
    <property type="evidence" value="ECO:0007669"/>
    <property type="project" value="UniProtKB-SubCell"/>
</dbReference>
<dbReference type="GO" id="GO:0045259">
    <property type="term" value="C:proton-transporting ATP synthase complex"/>
    <property type="evidence" value="ECO:0007669"/>
    <property type="project" value="UniProtKB-KW"/>
</dbReference>
<dbReference type="GO" id="GO:0005524">
    <property type="term" value="F:ATP binding"/>
    <property type="evidence" value="ECO:0007669"/>
    <property type="project" value="UniProtKB-UniRule"/>
</dbReference>
<dbReference type="GO" id="GO:0016887">
    <property type="term" value="F:ATP hydrolysis activity"/>
    <property type="evidence" value="ECO:0007669"/>
    <property type="project" value="InterPro"/>
</dbReference>
<dbReference type="GO" id="GO:0046933">
    <property type="term" value="F:proton-transporting ATP synthase activity, rotational mechanism"/>
    <property type="evidence" value="ECO:0007669"/>
    <property type="project" value="UniProtKB-UniRule"/>
</dbReference>
<dbReference type="CDD" id="cd18110">
    <property type="entry name" value="ATP-synt_F1_beta_C"/>
    <property type="match status" value="1"/>
</dbReference>
<dbReference type="CDD" id="cd18115">
    <property type="entry name" value="ATP-synt_F1_beta_N"/>
    <property type="match status" value="1"/>
</dbReference>
<dbReference type="CDD" id="cd01133">
    <property type="entry name" value="F1-ATPase_beta_CD"/>
    <property type="match status" value="1"/>
</dbReference>
<dbReference type="FunFam" id="1.10.1140.10:FF:000001">
    <property type="entry name" value="ATP synthase subunit beta"/>
    <property type="match status" value="1"/>
</dbReference>
<dbReference type="FunFam" id="3.40.50.300:FF:000004">
    <property type="entry name" value="ATP synthase subunit beta"/>
    <property type="match status" value="1"/>
</dbReference>
<dbReference type="Gene3D" id="2.40.10.170">
    <property type="match status" value="1"/>
</dbReference>
<dbReference type="Gene3D" id="1.10.1140.10">
    <property type="entry name" value="Bovine Mitochondrial F1-atpase, Atp Synthase Beta Chain, Chain D, domain 3"/>
    <property type="match status" value="1"/>
</dbReference>
<dbReference type="Gene3D" id="3.40.50.300">
    <property type="entry name" value="P-loop containing nucleotide triphosphate hydrolases"/>
    <property type="match status" value="1"/>
</dbReference>
<dbReference type="HAMAP" id="MF_01347">
    <property type="entry name" value="ATP_synth_beta_bact"/>
    <property type="match status" value="1"/>
</dbReference>
<dbReference type="InterPro" id="IPR003593">
    <property type="entry name" value="AAA+_ATPase"/>
</dbReference>
<dbReference type="InterPro" id="IPR055190">
    <property type="entry name" value="ATP-synt_VA_C"/>
</dbReference>
<dbReference type="InterPro" id="IPR005722">
    <property type="entry name" value="ATP_synth_F1_bsu"/>
</dbReference>
<dbReference type="InterPro" id="IPR020003">
    <property type="entry name" value="ATPase_a/bsu_AS"/>
</dbReference>
<dbReference type="InterPro" id="IPR050053">
    <property type="entry name" value="ATPase_alpha/beta_chains"/>
</dbReference>
<dbReference type="InterPro" id="IPR004100">
    <property type="entry name" value="ATPase_F1/V1/A1_a/bsu_N"/>
</dbReference>
<dbReference type="InterPro" id="IPR036121">
    <property type="entry name" value="ATPase_F1/V1/A1_a/bsu_N_sf"/>
</dbReference>
<dbReference type="InterPro" id="IPR000194">
    <property type="entry name" value="ATPase_F1/V1/A1_a/bsu_nucl-bd"/>
</dbReference>
<dbReference type="InterPro" id="IPR024034">
    <property type="entry name" value="ATPase_F1/V1_b/a_C"/>
</dbReference>
<dbReference type="InterPro" id="IPR027417">
    <property type="entry name" value="P-loop_NTPase"/>
</dbReference>
<dbReference type="NCBIfam" id="TIGR01039">
    <property type="entry name" value="atpD"/>
    <property type="match status" value="1"/>
</dbReference>
<dbReference type="PANTHER" id="PTHR15184">
    <property type="entry name" value="ATP SYNTHASE"/>
    <property type="match status" value="1"/>
</dbReference>
<dbReference type="PANTHER" id="PTHR15184:SF71">
    <property type="entry name" value="ATP SYNTHASE SUBUNIT BETA, MITOCHONDRIAL"/>
    <property type="match status" value="1"/>
</dbReference>
<dbReference type="Pfam" id="PF00006">
    <property type="entry name" value="ATP-synt_ab"/>
    <property type="match status" value="1"/>
</dbReference>
<dbReference type="Pfam" id="PF02874">
    <property type="entry name" value="ATP-synt_ab_N"/>
    <property type="match status" value="1"/>
</dbReference>
<dbReference type="Pfam" id="PF22919">
    <property type="entry name" value="ATP-synt_VA_C"/>
    <property type="match status" value="1"/>
</dbReference>
<dbReference type="SMART" id="SM00382">
    <property type="entry name" value="AAA"/>
    <property type="match status" value="1"/>
</dbReference>
<dbReference type="SUPFAM" id="SSF47917">
    <property type="entry name" value="C-terminal domain of alpha and beta subunits of F1 ATP synthase"/>
    <property type="match status" value="1"/>
</dbReference>
<dbReference type="SUPFAM" id="SSF50615">
    <property type="entry name" value="N-terminal domain of alpha and beta subunits of F1 ATP synthase"/>
    <property type="match status" value="1"/>
</dbReference>
<dbReference type="SUPFAM" id="SSF52540">
    <property type="entry name" value="P-loop containing nucleoside triphosphate hydrolases"/>
    <property type="match status" value="1"/>
</dbReference>
<dbReference type="PROSITE" id="PS00152">
    <property type="entry name" value="ATPASE_ALPHA_BETA"/>
    <property type="match status" value="1"/>
</dbReference>
<organism>
    <name type="scientific">Helicobacter pylori (strain P12)</name>
    <dbReference type="NCBI Taxonomy" id="570508"/>
    <lineage>
        <taxon>Bacteria</taxon>
        <taxon>Pseudomonadati</taxon>
        <taxon>Campylobacterota</taxon>
        <taxon>Epsilonproteobacteria</taxon>
        <taxon>Campylobacterales</taxon>
        <taxon>Helicobacteraceae</taxon>
        <taxon>Helicobacter</taxon>
    </lineage>
</organism>
<keyword id="KW-0066">ATP synthesis</keyword>
<keyword id="KW-0067">ATP-binding</keyword>
<keyword id="KW-0997">Cell inner membrane</keyword>
<keyword id="KW-1003">Cell membrane</keyword>
<keyword id="KW-0139">CF(1)</keyword>
<keyword id="KW-0375">Hydrogen ion transport</keyword>
<keyword id="KW-0406">Ion transport</keyword>
<keyword id="KW-0472">Membrane</keyword>
<keyword id="KW-0547">Nucleotide-binding</keyword>
<keyword id="KW-1278">Translocase</keyword>
<keyword id="KW-0813">Transport</keyword>
<comment type="function">
    <text evidence="1">Produces ATP from ADP in the presence of a proton gradient across the membrane. The catalytic sites are hosted primarily by the beta subunits.</text>
</comment>
<comment type="catalytic activity">
    <reaction evidence="1">
        <text>ATP + H2O + 4 H(+)(in) = ADP + phosphate + 5 H(+)(out)</text>
        <dbReference type="Rhea" id="RHEA:57720"/>
        <dbReference type="ChEBI" id="CHEBI:15377"/>
        <dbReference type="ChEBI" id="CHEBI:15378"/>
        <dbReference type="ChEBI" id="CHEBI:30616"/>
        <dbReference type="ChEBI" id="CHEBI:43474"/>
        <dbReference type="ChEBI" id="CHEBI:456216"/>
        <dbReference type="EC" id="7.1.2.2"/>
    </reaction>
</comment>
<comment type="subunit">
    <text evidence="1">F-type ATPases have 2 components, CF(1) - the catalytic core - and CF(0) - the membrane proton channel. CF(1) has five subunits: alpha(3), beta(3), gamma(1), delta(1), epsilon(1). CF(0) has three main subunits: a(1), b(2) and c(9-12). The alpha and beta chains form an alternating ring which encloses part of the gamma chain. CF(1) is attached to CF(0) by a central stalk formed by the gamma and epsilon chains, while a peripheral stalk is formed by the delta and b chains.</text>
</comment>
<comment type="subcellular location">
    <subcellularLocation>
        <location evidence="1">Cell inner membrane</location>
        <topology evidence="1">Peripheral membrane protein</topology>
    </subcellularLocation>
</comment>
<comment type="similarity">
    <text evidence="1">Belongs to the ATPase alpha/beta chains family.</text>
</comment>
<proteinExistence type="inferred from homology"/>
<name>ATPB_HELP2</name>
<reference key="1">
    <citation type="submission" date="2008-10" db="EMBL/GenBank/DDBJ databases">
        <title>The complete genome sequence of Helicobacter pylori strain P12.</title>
        <authorList>
            <person name="Fischer W."/>
            <person name="Windhager L."/>
            <person name="Karnholz A."/>
            <person name="Zeiller M."/>
            <person name="Zimmer R."/>
            <person name="Haas R."/>
        </authorList>
    </citation>
    <scope>NUCLEOTIDE SEQUENCE [LARGE SCALE GENOMIC DNA]</scope>
    <source>
        <strain>P12</strain>
    </source>
</reference>
<evidence type="ECO:0000255" key="1">
    <source>
        <dbReference type="HAMAP-Rule" id="MF_01347"/>
    </source>
</evidence>
<protein>
    <recommendedName>
        <fullName evidence="1">ATP synthase subunit beta</fullName>
        <ecNumber evidence="1">7.1.2.2</ecNumber>
    </recommendedName>
    <alternativeName>
        <fullName evidence="1">ATP synthase F1 sector subunit beta</fullName>
    </alternativeName>
    <alternativeName>
        <fullName evidence="1">F-ATPase subunit beta</fullName>
    </alternativeName>
</protein>